<evidence type="ECO:0000255" key="1">
    <source>
        <dbReference type="HAMAP-Rule" id="MF_00375"/>
    </source>
</evidence>
<gene>
    <name evidence="1" type="primary">hemL</name>
    <name type="ordered locus">EcolC_3505</name>
</gene>
<organism>
    <name type="scientific">Escherichia coli (strain ATCC 8739 / DSM 1576 / NBRC 3972 / NCIMB 8545 / WDCM 00012 / Crooks)</name>
    <dbReference type="NCBI Taxonomy" id="481805"/>
    <lineage>
        <taxon>Bacteria</taxon>
        <taxon>Pseudomonadati</taxon>
        <taxon>Pseudomonadota</taxon>
        <taxon>Gammaproteobacteria</taxon>
        <taxon>Enterobacterales</taxon>
        <taxon>Enterobacteriaceae</taxon>
        <taxon>Escherichia</taxon>
    </lineage>
</organism>
<accession>B1IQI6</accession>
<comment type="catalytic activity">
    <reaction evidence="1">
        <text>(S)-4-amino-5-oxopentanoate = 5-aminolevulinate</text>
        <dbReference type="Rhea" id="RHEA:14265"/>
        <dbReference type="ChEBI" id="CHEBI:57501"/>
        <dbReference type="ChEBI" id="CHEBI:356416"/>
        <dbReference type="EC" id="5.4.3.8"/>
    </reaction>
</comment>
<comment type="cofactor">
    <cofactor evidence="1">
        <name>pyridoxal 5'-phosphate</name>
        <dbReference type="ChEBI" id="CHEBI:597326"/>
    </cofactor>
</comment>
<comment type="pathway">
    <text evidence="1">Porphyrin-containing compound metabolism; protoporphyrin-IX biosynthesis; 5-aminolevulinate from L-glutamyl-tRNA(Glu): step 2/2.</text>
</comment>
<comment type="subunit">
    <text evidence="1">Homodimer.</text>
</comment>
<comment type="subcellular location">
    <subcellularLocation>
        <location evidence="1">Cytoplasm</location>
    </subcellularLocation>
</comment>
<comment type="similarity">
    <text evidence="1">Belongs to the class-III pyridoxal-phosphate-dependent aminotransferase family. HemL subfamily.</text>
</comment>
<protein>
    <recommendedName>
        <fullName evidence="1">Glutamate-1-semialdehyde 2,1-aminomutase</fullName>
        <shortName evidence="1">GSA</shortName>
        <ecNumber evidence="1">5.4.3.8</ecNumber>
    </recommendedName>
    <alternativeName>
        <fullName evidence="1">Glutamate-1-semialdehyde aminotransferase</fullName>
        <shortName evidence="1">GSA-AT</shortName>
    </alternativeName>
</protein>
<sequence length="426" mass="45356">MSKSENLYSAARELIPGGVNSPVRAFTGVGGTPLFIEKADGAYLYDVDGKAYIDYVGSWGPMVLGHNHPAIRNAVIEAAERGLSFGAPTEMEVKMAQLVTELVPTMDMVRMVNSGTEATMSAIRLARGFTGRDKIIKFEGCYHGHADCLLVKAGSGALTLGQPNSPGVPADFAKHTLTCTYNDLASVRAAFEQYPQEIACIIVEPVAGNMNCVPPLPEFLPGLRALCDEFGALLIIDEVMTGFRVALAGAQDYYGVEPDLTCLGKIIGGGMPVGAFGGRRDVMDALAPTGPVYQAGTLSGNPIAMAAGFACLNEVAQPGVHETLDELTSRLAEGLLEAAEEAGIPLVVNHVGGMFGIFFTDAESVTCYQDVMACDVERFKRFFHMMLDEGVYLAPSAFEAGFMSVAHSMEDINNTIDAARRVFAKL</sequence>
<feature type="chain" id="PRO_1000079921" description="Glutamate-1-semialdehyde 2,1-aminomutase">
    <location>
        <begin position="1"/>
        <end position="426"/>
    </location>
</feature>
<feature type="modified residue" description="N6-(pyridoxal phosphate)lysine" evidence="1">
    <location>
        <position position="265"/>
    </location>
</feature>
<name>GSA_ECOLC</name>
<keyword id="KW-0963">Cytoplasm</keyword>
<keyword id="KW-0413">Isomerase</keyword>
<keyword id="KW-0627">Porphyrin biosynthesis</keyword>
<keyword id="KW-0663">Pyridoxal phosphate</keyword>
<reference key="1">
    <citation type="submission" date="2008-02" db="EMBL/GenBank/DDBJ databases">
        <title>Complete sequence of Escherichia coli C str. ATCC 8739.</title>
        <authorList>
            <person name="Copeland A."/>
            <person name="Lucas S."/>
            <person name="Lapidus A."/>
            <person name="Glavina del Rio T."/>
            <person name="Dalin E."/>
            <person name="Tice H."/>
            <person name="Bruce D."/>
            <person name="Goodwin L."/>
            <person name="Pitluck S."/>
            <person name="Kiss H."/>
            <person name="Brettin T."/>
            <person name="Detter J.C."/>
            <person name="Han C."/>
            <person name="Kuske C.R."/>
            <person name="Schmutz J."/>
            <person name="Larimer F."/>
            <person name="Land M."/>
            <person name="Hauser L."/>
            <person name="Kyrpides N."/>
            <person name="Mikhailova N."/>
            <person name="Ingram L."/>
            <person name="Richardson P."/>
        </authorList>
    </citation>
    <scope>NUCLEOTIDE SEQUENCE [LARGE SCALE GENOMIC DNA]</scope>
    <source>
        <strain>ATCC 8739 / DSM 1576 / NBRC 3972 / NCIMB 8545 / WDCM 00012 / Crooks</strain>
    </source>
</reference>
<dbReference type="EC" id="5.4.3.8" evidence="1"/>
<dbReference type="EMBL" id="CP000946">
    <property type="protein sequence ID" value="ACA79119.1"/>
    <property type="molecule type" value="Genomic_DNA"/>
</dbReference>
<dbReference type="RefSeq" id="WP_000045290.1">
    <property type="nucleotide sequence ID" value="NZ_MTFT01000035.1"/>
</dbReference>
<dbReference type="SMR" id="B1IQI6"/>
<dbReference type="KEGG" id="ecl:EcolC_3505"/>
<dbReference type="HOGENOM" id="CLU_016922_1_5_6"/>
<dbReference type="UniPathway" id="UPA00251">
    <property type="reaction ID" value="UER00317"/>
</dbReference>
<dbReference type="GO" id="GO:0005737">
    <property type="term" value="C:cytoplasm"/>
    <property type="evidence" value="ECO:0007669"/>
    <property type="project" value="UniProtKB-SubCell"/>
</dbReference>
<dbReference type="GO" id="GO:0042286">
    <property type="term" value="F:glutamate-1-semialdehyde 2,1-aminomutase activity"/>
    <property type="evidence" value="ECO:0007669"/>
    <property type="project" value="UniProtKB-UniRule"/>
</dbReference>
<dbReference type="GO" id="GO:0030170">
    <property type="term" value="F:pyridoxal phosphate binding"/>
    <property type="evidence" value="ECO:0007669"/>
    <property type="project" value="InterPro"/>
</dbReference>
<dbReference type="GO" id="GO:0008483">
    <property type="term" value="F:transaminase activity"/>
    <property type="evidence" value="ECO:0007669"/>
    <property type="project" value="InterPro"/>
</dbReference>
<dbReference type="GO" id="GO:0006782">
    <property type="term" value="P:protoporphyrinogen IX biosynthetic process"/>
    <property type="evidence" value="ECO:0007669"/>
    <property type="project" value="UniProtKB-UniRule"/>
</dbReference>
<dbReference type="CDD" id="cd00610">
    <property type="entry name" value="OAT_like"/>
    <property type="match status" value="1"/>
</dbReference>
<dbReference type="FunFam" id="3.40.640.10:FF:000021">
    <property type="entry name" value="Glutamate-1-semialdehyde 2,1-aminomutase"/>
    <property type="match status" value="1"/>
</dbReference>
<dbReference type="FunFam" id="3.90.1150.10:FF:000012">
    <property type="entry name" value="Glutamate-1-semialdehyde 2,1-aminomutase"/>
    <property type="match status" value="1"/>
</dbReference>
<dbReference type="Gene3D" id="3.90.1150.10">
    <property type="entry name" value="Aspartate Aminotransferase, domain 1"/>
    <property type="match status" value="1"/>
</dbReference>
<dbReference type="Gene3D" id="3.40.640.10">
    <property type="entry name" value="Type I PLP-dependent aspartate aminotransferase-like (Major domain)"/>
    <property type="match status" value="1"/>
</dbReference>
<dbReference type="HAMAP" id="MF_00375">
    <property type="entry name" value="HemL_aminotrans_3"/>
    <property type="match status" value="1"/>
</dbReference>
<dbReference type="InterPro" id="IPR004639">
    <property type="entry name" value="4pyrrol_synth_GluAld_NH2Trfase"/>
</dbReference>
<dbReference type="InterPro" id="IPR005814">
    <property type="entry name" value="Aminotrans_3"/>
</dbReference>
<dbReference type="InterPro" id="IPR049704">
    <property type="entry name" value="Aminotrans_3_PPA_site"/>
</dbReference>
<dbReference type="InterPro" id="IPR015424">
    <property type="entry name" value="PyrdxlP-dep_Trfase"/>
</dbReference>
<dbReference type="InterPro" id="IPR015421">
    <property type="entry name" value="PyrdxlP-dep_Trfase_major"/>
</dbReference>
<dbReference type="InterPro" id="IPR015422">
    <property type="entry name" value="PyrdxlP-dep_Trfase_small"/>
</dbReference>
<dbReference type="NCBIfam" id="TIGR00713">
    <property type="entry name" value="hemL"/>
    <property type="match status" value="1"/>
</dbReference>
<dbReference type="NCBIfam" id="NF000818">
    <property type="entry name" value="PRK00062.1"/>
    <property type="match status" value="1"/>
</dbReference>
<dbReference type="PANTHER" id="PTHR43713">
    <property type="entry name" value="GLUTAMATE-1-SEMIALDEHYDE 2,1-AMINOMUTASE"/>
    <property type="match status" value="1"/>
</dbReference>
<dbReference type="PANTHER" id="PTHR43713:SF3">
    <property type="entry name" value="GLUTAMATE-1-SEMIALDEHYDE 2,1-AMINOMUTASE 1, CHLOROPLASTIC-RELATED"/>
    <property type="match status" value="1"/>
</dbReference>
<dbReference type="Pfam" id="PF00202">
    <property type="entry name" value="Aminotran_3"/>
    <property type="match status" value="1"/>
</dbReference>
<dbReference type="SUPFAM" id="SSF53383">
    <property type="entry name" value="PLP-dependent transferases"/>
    <property type="match status" value="1"/>
</dbReference>
<dbReference type="PROSITE" id="PS00600">
    <property type="entry name" value="AA_TRANSFER_CLASS_3"/>
    <property type="match status" value="1"/>
</dbReference>
<proteinExistence type="inferred from homology"/>